<sequence>MTIRYPSGQQPPNVGRAEQPIVAPHSSSFAKRGMSLEKEINDANRYYLATEQAVIYKKPTPIQLVKVDYPKRSAAVVKEAYFKRPSTTDYNGVYQGYYVDFDAKETRGKLSFPLKNFHQHQVDHFRRCLAQGGVCFAFIRFTTLDLTYLLPASDLIAFWDQQGRGGRKSVPLTTIKDRGFRVKTGLTPVLDYLPALDQLIAANQAKGADHE</sequence>
<keyword id="KW-0963">Cytoplasm</keyword>
<keyword id="KW-0227">DNA damage</keyword>
<keyword id="KW-0233">DNA recombination</keyword>
<keyword id="KW-0234">DNA repair</keyword>
<keyword id="KW-0255">Endonuclease</keyword>
<keyword id="KW-0378">Hydrolase</keyword>
<keyword id="KW-0460">Magnesium</keyword>
<keyword id="KW-0479">Metal-binding</keyword>
<keyword id="KW-0540">Nuclease</keyword>
<keyword id="KW-1185">Reference proteome</keyword>
<feature type="chain" id="PRO_1000095676" description="Holliday junction resolvase RecU">
    <location>
        <begin position="1"/>
        <end position="211"/>
    </location>
</feature>
<feature type="binding site" evidence="1">
    <location>
        <position position="87"/>
    </location>
    <ligand>
        <name>Mg(2+)</name>
        <dbReference type="ChEBI" id="CHEBI:18420"/>
    </ligand>
</feature>
<feature type="binding site" evidence="1">
    <location>
        <position position="89"/>
    </location>
    <ligand>
        <name>Mg(2+)</name>
        <dbReference type="ChEBI" id="CHEBI:18420"/>
    </ligand>
</feature>
<feature type="binding site" evidence="1">
    <location>
        <position position="102"/>
    </location>
    <ligand>
        <name>Mg(2+)</name>
        <dbReference type="ChEBI" id="CHEBI:18420"/>
    </ligand>
</feature>
<feature type="binding site" evidence="1">
    <location>
        <position position="121"/>
    </location>
    <ligand>
        <name>Mg(2+)</name>
        <dbReference type="ChEBI" id="CHEBI:18420"/>
    </ligand>
</feature>
<feature type="site" description="Transition state stabilizer" evidence="1">
    <location>
        <position position="104"/>
    </location>
</feature>
<dbReference type="EC" id="3.1.21.10" evidence="1"/>
<dbReference type="EMBL" id="AP008937">
    <property type="protein sequence ID" value="BAG27519.1"/>
    <property type="molecule type" value="Genomic_DNA"/>
</dbReference>
<dbReference type="RefSeq" id="WP_012391406.1">
    <property type="nucleotide sequence ID" value="NC_010610.1"/>
</dbReference>
<dbReference type="SMR" id="B2GCY7"/>
<dbReference type="KEGG" id="lfe:LAF_1183"/>
<dbReference type="PATRIC" id="fig|334390.5.peg.1307"/>
<dbReference type="eggNOG" id="COG3331">
    <property type="taxonomic scope" value="Bacteria"/>
</dbReference>
<dbReference type="HOGENOM" id="CLU_096340_0_0_9"/>
<dbReference type="Proteomes" id="UP000001697">
    <property type="component" value="Chromosome"/>
</dbReference>
<dbReference type="GO" id="GO:0005737">
    <property type="term" value="C:cytoplasm"/>
    <property type="evidence" value="ECO:0007669"/>
    <property type="project" value="UniProtKB-SubCell"/>
</dbReference>
<dbReference type="GO" id="GO:0004519">
    <property type="term" value="F:endonuclease activity"/>
    <property type="evidence" value="ECO:0007669"/>
    <property type="project" value="UniProtKB-UniRule"/>
</dbReference>
<dbReference type="GO" id="GO:0000287">
    <property type="term" value="F:magnesium ion binding"/>
    <property type="evidence" value="ECO:0007669"/>
    <property type="project" value="UniProtKB-UniRule"/>
</dbReference>
<dbReference type="GO" id="GO:0003676">
    <property type="term" value="F:nucleic acid binding"/>
    <property type="evidence" value="ECO:0007669"/>
    <property type="project" value="InterPro"/>
</dbReference>
<dbReference type="GO" id="GO:0007059">
    <property type="term" value="P:chromosome segregation"/>
    <property type="evidence" value="ECO:0007669"/>
    <property type="project" value="UniProtKB-UniRule"/>
</dbReference>
<dbReference type="GO" id="GO:0006310">
    <property type="term" value="P:DNA recombination"/>
    <property type="evidence" value="ECO:0007669"/>
    <property type="project" value="UniProtKB-UniRule"/>
</dbReference>
<dbReference type="GO" id="GO:0006281">
    <property type="term" value="P:DNA repair"/>
    <property type="evidence" value="ECO:0007669"/>
    <property type="project" value="UniProtKB-UniRule"/>
</dbReference>
<dbReference type="CDD" id="cd22354">
    <property type="entry name" value="RecU-like"/>
    <property type="match status" value="1"/>
</dbReference>
<dbReference type="Gene3D" id="3.40.1350.10">
    <property type="match status" value="1"/>
</dbReference>
<dbReference type="HAMAP" id="MF_00130">
    <property type="entry name" value="RecU"/>
    <property type="match status" value="1"/>
</dbReference>
<dbReference type="InterPro" id="IPR004612">
    <property type="entry name" value="Resolv_RecU"/>
</dbReference>
<dbReference type="InterPro" id="IPR011335">
    <property type="entry name" value="Restrct_endonuc-II-like"/>
</dbReference>
<dbReference type="InterPro" id="IPR011856">
    <property type="entry name" value="tRNA_endonuc-like_dom_sf"/>
</dbReference>
<dbReference type="NCBIfam" id="NF002584">
    <property type="entry name" value="PRK02234.1-5"/>
    <property type="match status" value="1"/>
</dbReference>
<dbReference type="NCBIfam" id="TIGR00648">
    <property type="entry name" value="recU"/>
    <property type="match status" value="1"/>
</dbReference>
<dbReference type="Pfam" id="PF03838">
    <property type="entry name" value="RecU"/>
    <property type="match status" value="1"/>
</dbReference>
<dbReference type="PIRSF" id="PIRSF037785">
    <property type="entry name" value="RecU"/>
    <property type="match status" value="1"/>
</dbReference>
<dbReference type="SUPFAM" id="SSF52980">
    <property type="entry name" value="Restriction endonuclease-like"/>
    <property type="match status" value="1"/>
</dbReference>
<organism>
    <name type="scientific">Limosilactobacillus fermentum (strain NBRC 3956 / LMG 18251)</name>
    <name type="common">Lactobacillus fermentum</name>
    <dbReference type="NCBI Taxonomy" id="334390"/>
    <lineage>
        <taxon>Bacteria</taxon>
        <taxon>Bacillati</taxon>
        <taxon>Bacillota</taxon>
        <taxon>Bacilli</taxon>
        <taxon>Lactobacillales</taxon>
        <taxon>Lactobacillaceae</taxon>
        <taxon>Limosilactobacillus</taxon>
    </lineage>
</organism>
<evidence type="ECO:0000255" key="1">
    <source>
        <dbReference type="HAMAP-Rule" id="MF_00130"/>
    </source>
</evidence>
<protein>
    <recommendedName>
        <fullName evidence="1">Holliday junction resolvase RecU</fullName>
        <ecNumber evidence="1">3.1.21.10</ecNumber>
    </recommendedName>
    <alternativeName>
        <fullName evidence="1">Recombination protein U homolog</fullName>
    </alternativeName>
</protein>
<comment type="function">
    <text evidence="1">Endonuclease that resolves Holliday junction intermediates in genetic recombination. Cleaves mobile four-strand junctions by introducing symmetrical nicks in paired strands. Promotes annealing of linear ssDNA with homologous dsDNA. Required for DNA repair, homologous recombination and chromosome segregation.</text>
</comment>
<comment type="catalytic activity">
    <reaction evidence="1">
        <text>Endonucleolytic cleavage at a junction such as a reciprocal single-stranded crossover between two homologous DNA duplexes (Holliday junction).</text>
        <dbReference type="EC" id="3.1.21.10"/>
    </reaction>
</comment>
<comment type="cofactor">
    <cofactor evidence="1">
        <name>Mg(2+)</name>
        <dbReference type="ChEBI" id="CHEBI:18420"/>
    </cofactor>
    <text evidence="1">Binds 1 Mg(2+) ion per subunit.</text>
</comment>
<comment type="subcellular location">
    <subcellularLocation>
        <location evidence="1">Cytoplasm</location>
    </subcellularLocation>
</comment>
<comment type="similarity">
    <text evidence="1">Belongs to the RecU family.</text>
</comment>
<name>RECU_LIMF3</name>
<reference key="1">
    <citation type="journal article" date="2008" name="DNA Res.">
        <title>Comparative genome analysis of Lactobacillus reuteri and Lactobacillus fermentum reveal a genomic island for reuterin and cobalamin production.</title>
        <authorList>
            <person name="Morita H."/>
            <person name="Toh H."/>
            <person name="Fukuda S."/>
            <person name="Horikawa H."/>
            <person name="Oshima K."/>
            <person name="Suzuki T."/>
            <person name="Murakami M."/>
            <person name="Hisamatsu S."/>
            <person name="Kato Y."/>
            <person name="Takizawa T."/>
            <person name="Fukuoka H."/>
            <person name="Yoshimura T."/>
            <person name="Itoh K."/>
            <person name="O'Sullivan D.J."/>
            <person name="McKay L.L."/>
            <person name="Ohno H."/>
            <person name="Kikuchi J."/>
            <person name="Masaoka T."/>
            <person name="Hattori M."/>
        </authorList>
    </citation>
    <scope>NUCLEOTIDE SEQUENCE [LARGE SCALE GENOMIC DNA]</scope>
    <source>
        <strain>NBRC 3956 / LMG 18251</strain>
    </source>
</reference>
<gene>
    <name evidence="1" type="primary">recU</name>
    <name type="ordered locus">LAF_1183</name>
</gene>
<proteinExistence type="inferred from homology"/>
<accession>B2GCY7</accession>